<protein>
    <recommendedName>
        <fullName>Follitropin subunit beta</fullName>
    </recommendedName>
    <alternativeName>
        <fullName>Follicle-stimulating hormone beta subunit</fullName>
        <shortName>FSH-B</shortName>
        <shortName>FSH-beta</shortName>
    </alternativeName>
    <alternativeName>
        <fullName>Follitropin beta chain</fullName>
    </alternativeName>
</protein>
<dbReference type="EMBL" id="AF406610">
    <property type="protein sequence ID" value="AAK92541.1"/>
    <property type="molecule type" value="mRNA"/>
</dbReference>
<dbReference type="RefSeq" id="NP_001028155.1">
    <property type="nucleotide sequence ID" value="NM_001032983.1"/>
</dbReference>
<dbReference type="RefSeq" id="XP_007496656.1">
    <property type="nucleotide sequence ID" value="XM_007496594.2"/>
</dbReference>
<dbReference type="SMR" id="Q95J82"/>
<dbReference type="FunCoup" id="Q95J82">
    <property type="interactions" value="39"/>
</dbReference>
<dbReference type="STRING" id="13616.ENSMODP00000011901"/>
<dbReference type="GlyCosmos" id="Q95J82">
    <property type="glycosylation" value="2 sites, No reported glycans"/>
</dbReference>
<dbReference type="Ensembl" id="ENSMODT00000012125.2">
    <property type="protein sequence ID" value="ENSMODP00000011901.3"/>
    <property type="gene ID" value="ENSMODG00000009526.3"/>
</dbReference>
<dbReference type="GeneID" id="554190"/>
<dbReference type="KEGG" id="mdo:554190"/>
<dbReference type="CTD" id="2488"/>
<dbReference type="eggNOG" id="ENOG502S39C">
    <property type="taxonomic scope" value="Eukaryota"/>
</dbReference>
<dbReference type="GeneTree" id="ENSGT00940000160051"/>
<dbReference type="HOGENOM" id="CLU_126319_3_0_1"/>
<dbReference type="InParanoid" id="Q95J82"/>
<dbReference type="OMA" id="PVATGCH"/>
<dbReference type="OrthoDB" id="8453657at2759"/>
<dbReference type="Proteomes" id="UP000002280">
    <property type="component" value="Chromosome 5"/>
</dbReference>
<dbReference type="Bgee" id="ENSMODG00000009526">
    <property type="expression patterns" value="Expressed in spermatocyte and 5 other cell types or tissues"/>
</dbReference>
<dbReference type="ExpressionAtlas" id="Q95J82">
    <property type="expression patterns" value="baseline"/>
</dbReference>
<dbReference type="GO" id="GO:0005737">
    <property type="term" value="C:cytoplasm"/>
    <property type="evidence" value="ECO:0000318"/>
    <property type="project" value="GO_Central"/>
</dbReference>
<dbReference type="GO" id="GO:0005615">
    <property type="term" value="C:extracellular space"/>
    <property type="evidence" value="ECO:0000250"/>
    <property type="project" value="UniProtKB"/>
</dbReference>
<dbReference type="GO" id="GO:0016914">
    <property type="term" value="C:follicle-stimulating hormone complex"/>
    <property type="evidence" value="ECO:0000250"/>
    <property type="project" value="UniProtKB"/>
</dbReference>
<dbReference type="GO" id="GO:0016913">
    <property type="term" value="F:follicle-stimulating hormone activity"/>
    <property type="evidence" value="ECO:0000250"/>
    <property type="project" value="UniProtKB"/>
</dbReference>
<dbReference type="GO" id="GO:0042699">
    <property type="term" value="P:follicle-stimulating hormone signaling pathway"/>
    <property type="evidence" value="ECO:0000318"/>
    <property type="project" value="GO_Central"/>
</dbReference>
<dbReference type="GO" id="GO:0007186">
    <property type="term" value="P:G protein-coupled receptor signaling pathway"/>
    <property type="evidence" value="ECO:0000250"/>
    <property type="project" value="UniProtKB"/>
</dbReference>
<dbReference type="GO" id="GO:0045780">
    <property type="term" value="P:positive regulation of bone resorption"/>
    <property type="evidence" value="ECO:0007669"/>
    <property type="project" value="Ensembl"/>
</dbReference>
<dbReference type="GO" id="GO:0010628">
    <property type="term" value="P:positive regulation of gene expression"/>
    <property type="evidence" value="ECO:0007669"/>
    <property type="project" value="Ensembl"/>
</dbReference>
<dbReference type="GO" id="GO:0010893">
    <property type="term" value="P:positive regulation of steroid biosynthetic process"/>
    <property type="evidence" value="ECO:0007669"/>
    <property type="project" value="Ensembl"/>
</dbReference>
<dbReference type="GO" id="GO:0045670">
    <property type="term" value="P:regulation of osteoclast differentiation"/>
    <property type="evidence" value="ECO:0007669"/>
    <property type="project" value="Ensembl"/>
</dbReference>
<dbReference type="GO" id="GO:0010469">
    <property type="term" value="P:regulation of signaling receptor activity"/>
    <property type="evidence" value="ECO:0000250"/>
    <property type="project" value="UniProtKB"/>
</dbReference>
<dbReference type="GO" id="GO:0060011">
    <property type="term" value="P:Sertoli cell proliferation"/>
    <property type="evidence" value="ECO:0007669"/>
    <property type="project" value="Ensembl"/>
</dbReference>
<dbReference type="GO" id="GO:0007283">
    <property type="term" value="P:spermatogenesis"/>
    <property type="evidence" value="ECO:0007669"/>
    <property type="project" value="Ensembl"/>
</dbReference>
<dbReference type="GO" id="GO:0007179">
    <property type="term" value="P:transforming growth factor beta receptor signaling pathway"/>
    <property type="evidence" value="ECO:0007669"/>
    <property type="project" value="Ensembl"/>
</dbReference>
<dbReference type="CDD" id="cd00069">
    <property type="entry name" value="GHB_like"/>
    <property type="match status" value="1"/>
</dbReference>
<dbReference type="FunFam" id="2.10.90.10:FF:000007">
    <property type="entry name" value="Luteinizing hormone beta subunit"/>
    <property type="match status" value="1"/>
</dbReference>
<dbReference type="Gene3D" id="2.10.90.10">
    <property type="entry name" value="Cystine-knot cytokines"/>
    <property type="match status" value="1"/>
</dbReference>
<dbReference type="InterPro" id="IPR029034">
    <property type="entry name" value="Cystine-knot_cytokine"/>
</dbReference>
<dbReference type="InterPro" id="IPR006208">
    <property type="entry name" value="Glyco_hormone_CN"/>
</dbReference>
<dbReference type="InterPro" id="IPR001545">
    <property type="entry name" value="Gonadotropin_bsu"/>
</dbReference>
<dbReference type="InterPro" id="IPR018245">
    <property type="entry name" value="Gonadotropin_bsu_CS"/>
</dbReference>
<dbReference type="PANTHER" id="PTHR11515:SF17">
    <property type="entry name" value="FOLLITROPIN SUBUNIT BETA"/>
    <property type="match status" value="1"/>
</dbReference>
<dbReference type="PANTHER" id="PTHR11515">
    <property type="entry name" value="GLYCOPROTEIN HORMONE BETA CHAIN"/>
    <property type="match status" value="1"/>
</dbReference>
<dbReference type="Pfam" id="PF00007">
    <property type="entry name" value="Cys_knot"/>
    <property type="match status" value="1"/>
</dbReference>
<dbReference type="SMART" id="SM00068">
    <property type="entry name" value="GHB"/>
    <property type="match status" value="1"/>
</dbReference>
<dbReference type="SUPFAM" id="SSF57501">
    <property type="entry name" value="Cystine-knot cytokines"/>
    <property type="match status" value="1"/>
</dbReference>
<dbReference type="PROSITE" id="PS00261">
    <property type="entry name" value="GLYCO_HORMONE_BETA_1"/>
    <property type="match status" value="1"/>
</dbReference>
<dbReference type="PROSITE" id="PS00689">
    <property type="entry name" value="GLYCO_HORMONE_BETA_2"/>
    <property type="match status" value="1"/>
</dbReference>
<name>FSHB_MONDO</name>
<evidence type="ECO:0000250" key="1"/>
<evidence type="ECO:0000250" key="2">
    <source>
        <dbReference type="UniProtKB" id="P01225"/>
    </source>
</evidence>
<evidence type="ECO:0000305" key="3"/>
<accession>Q95J82</accession>
<comment type="function">
    <text evidence="2">Together with the alpha chain CGA constitutes follitropin, the follicle-stimulating hormone, and provides its biological specificity to the hormone heterodimer. Binds FSHR, a G protein-coupled receptor, on target cells to activate downstream signaling pathways. Follitropin is involved in follicle development and spermatogenesis in reproductive organs.</text>
</comment>
<comment type="subunit">
    <text evidence="2">Heterodimer. The active follitropin is a heterodimer composed of an alpha chain/CGA shared with other hormones and a unique beta chain/FSHB shown here.</text>
</comment>
<comment type="subcellular location">
    <subcellularLocation>
        <location evidence="2">Secreted</location>
    </subcellularLocation>
    <text evidence="2">Efficient secretion requires dimerization with CGA.</text>
</comment>
<comment type="similarity">
    <text evidence="3">Belongs to the glycoprotein hormones subunit beta family.</text>
</comment>
<keyword id="KW-1015">Disulfide bond</keyword>
<keyword id="KW-0325">Glycoprotein</keyword>
<keyword id="KW-0372">Hormone</keyword>
<keyword id="KW-1185">Reference proteome</keyword>
<keyword id="KW-0964">Secreted</keyword>
<keyword id="KW-0732">Signal</keyword>
<proteinExistence type="evidence at transcript level"/>
<gene>
    <name type="primary">FSHB</name>
</gene>
<sequence length="129" mass="14737">MKTAQFYIFFFCWKAIWCNGCVLTNITISVEREECEFCISINTTWCSGYCHTRDLVYKEPIRPNIQKACTFREFVYETMSLPGCANQADSLYSYPVATACHCGSCDTDSTDCTVRGLGPSYCSFNERKE</sequence>
<feature type="signal peptide" evidence="1">
    <location>
        <begin position="1"/>
        <end position="20"/>
    </location>
</feature>
<feature type="chain" id="PRO_0000042861" description="Follitropin subunit beta">
    <location>
        <begin position="21"/>
        <end position="129"/>
    </location>
</feature>
<feature type="glycosylation site" description="N-linked (GlcNAc...) asparagine" evidence="2">
    <location>
        <position position="25"/>
    </location>
</feature>
<feature type="glycosylation site" description="N-linked (GlcNAc...) asparagine" evidence="2">
    <location>
        <position position="42"/>
    </location>
</feature>
<feature type="disulfide bond" evidence="2">
    <location>
        <begin position="21"/>
        <end position="69"/>
    </location>
</feature>
<feature type="disulfide bond" evidence="2">
    <location>
        <begin position="35"/>
        <end position="84"/>
    </location>
</feature>
<feature type="disulfide bond" evidence="2">
    <location>
        <begin position="38"/>
        <end position="122"/>
    </location>
</feature>
<feature type="disulfide bond" evidence="2">
    <location>
        <begin position="46"/>
        <end position="100"/>
    </location>
</feature>
<feature type="disulfide bond" evidence="2">
    <location>
        <begin position="50"/>
        <end position="102"/>
    </location>
</feature>
<feature type="disulfide bond" evidence="2">
    <location>
        <begin position="105"/>
        <end position="112"/>
    </location>
</feature>
<reference key="1">
    <citation type="submission" date="2001-08" db="EMBL/GenBank/DDBJ databases">
        <title>Cloning and characterization of the cDNA encoding pituitary follicle-stimulating hormone beta (FSH-beta) precursor in the marsupial, Monodelphis domestica.</title>
        <authorList>
            <person name="Kacsoh B."/>
        </authorList>
    </citation>
    <scope>NUCLEOTIDE SEQUENCE [MRNA]</scope>
    <source>
        <tissue>Pituitary</tissue>
    </source>
</reference>
<organism>
    <name type="scientific">Monodelphis domestica</name>
    <name type="common">Gray short-tailed opossum</name>
    <dbReference type="NCBI Taxonomy" id="13616"/>
    <lineage>
        <taxon>Eukaryota</taxon>
        <taxon>Metazoa</taxon>
        <taxon>Chordata</taxon>
        <taxon>Craniata</taxon>
        <taxon>Vertebrata</taxon>
        <taxon>Euteleostomi</taxon>
        <taxon>Mammalia</taxon>
        <taxon>Metatheria</taxon>
        <taxon>Didelphimorphia</taxon>
        <taxon>Didelphidae</taxon>
        <taxon>Monodelphis</taxon>
    </lineage>
</organism>